<name>MURD_BIFAA</name>
<protein>
    <recommendedName>
        <fullName evidence="1">UDP-N-acetylmuramoylalanine--D-glutamate ligase</fullName>
        <ecNumber evidence="1">6.3.2.9</ecNumber>
    </recommendedName>
    <alternativeName>
        <fullName evidence="1">D-glutamic acid-adding enzyme</fullName>
    </alternativeName>
    <alternativeName>
        <fullName evidence="1">UDP-N-acetylmuramoyl-L-alanyl-D-glutamate synthetase</fullName>
    </alternativeName>
</protein>
<sequence length="479" mass="51022">MDMNMDGKTVIVAGLGVSGQSMMEVLGSRAGRVLGVDEKKPDADLHSFDQIDWDNTDMVMTSPVFNPRTPFILEAQKRNIPVMSEVELAWQLRVNSNTTGKPAQWIGITGTNGKTSTTEMTSEMLTACGLAAPAVGNIGKAVSHAAVDPANDVLCVELSSFQLHFTYSLELDCAAITNIADDHLDWHGGIENYAADKAKVFHNVKKALVYNADDERVTKLAFAAQTAPECRRIGFTLAEPKDGQIGVKDGWIVDMSGIAGGEAGKPFQVAKVTDFTHLTEPDGTVYPHLLADALTALALVLGLGADKDKALAALKQFTPGGHRIQTVAVAKTSDGGTIRFVDDSKATNAHAAKASLNSFADKSVVWIAGGLAKGSRFEQLVADQARTIKAAIIIGKDQQPMLDAFKASAPDIPMSIIDPTDNDTVMARAIDAAGTYAQSGDVVLMAPACASMDQFKSYADRGNQFAQQAQRWVNEHGEA</sequence>
<gene>
    <name evidence="1" type="primary">murD</name>
    <name type="ordered locus">BAD_1103</name>
</gene>
<feature type="chain" id="PRO_1000130829" description="UDP-N-acetylmuramoylalanine--D-glutamate ligase">
    <location>
        <begin position="1"/>
        <end position="479"/>
    </location>
</feature>
<feature type="binding site" evidence="1">
    <location>
        <begin position="110"/>
        <end position="116"/>
    </location>
    <ligand>
        <name>ATP</name>
        <dbReference type="ChEBI" id="CHEBI:30616"/>
    </ligand>
</feature>
<accession>A1A2F1</accession>
<organism>
    <name type="scientific">Bifidobacterium adolescentis (strain ATCC 15703 / DSM 20083 / NCTC 11814 / E194a)</name>
    <dbReference type="NCBI Taxonomy" id="367928"/>
    <lineage>
        <taxon>Bacteria</taxon>
        <taxon>Bacillati</taxon>
        <taxon>Actinomycetota</taxon>
        <taxon>Actinomycetes</taxon>
        <taxon>Bifidobacteriales</taxon>
        <taxon>Bifidobacteriaceae</taxon>
        <taxon>Bifidobacterium</taxon>
    </lineage>
</organism>
<keyword id="KW-0067">ATP-binding</keyword>
<keyword id="KW-0131">Cell cycle</keyword>
<keyword id="KW-0132">Cell division</keyword>
<keyword id="KW-0133">Cell shape</keyword>
<keyword id="KW-0961">Cell wall biogenesis/degradation</keyword>
<keyword id="KW-0963">Cytoplasm</keyword>
<keyword id="KW-0436">Ligase</keyword>
<keyword id="KW-0547">Nucleotide-binding</keyword>
<keyword id="KW-0573">Peptidoglycan synthesis</keyword>
<keyword id="KW-1185">Reference proteome</keyword>
<reference key="1">
    <citation type="submission" date="2006-12" db="EMBL/GenBank/DDBJ databases">
        <title>Bifidobacterium adolescentis complete genome sequence.</title>
        <authorList>
            <person name="Suzuki T."/>
            <person name="Tsuda Y."/>
            <person name="Kanou N."/>
            <person name="Inoue T."/>
            <person name="Kumazaki K."/>
            <person name="Nagano S."/>
            <person name="Hirai S."/>
            <person name="Tanaka K."/>
            <person name="Watanabe K."/>
        </authorList>
    </citation>
    <scope>NUCLEOTIDE SEQUENCE [LARGE SCALE GENOMIC DNA]</scope>
    <source>
        <strain>ATCC 15703 / DSM 20083 / NCTC 11814 / E194a</strain>
    </source>
</reference>
<dbReference type="EC" id="6.3.2.9" evidence="1"/>
<dbReference type="EMBL" id="AP009256">
    <property type="protein sequence ID" value="BAF39884.1"/>
    <property type="molecule type" value="Genomic_DNA"/>
</dbReference>
<dbReference type="RefSeq" id="WP_011743445.1">
    <property type="nucleotide sequence ID" value="NC_008618.1"/>
</dbReference>
<dbReference type="SMR" id="A1A2F1"/>
<dbReference type="STRING" id="367928.BAD_1103"/>
<dbReference type="PaxDb" id="1680-BADO_1153"/>
<dbReference type="GeneID" id="4556374"/>
<dbReference type="KEGG" id="bad:BAD_1103"/>
<dbReference type="HOGENOM" id="CLU_032540_0_0_11"/>
<dbReference type="UniPathway" id="UPA00219"/>
<dbReference type="Proteomes" id="UP000008702">
    <property type="component" value="Chromosome"/>
</dbReference>
<dbReference type="GO" id="GO:0005737">
    <property type="term" value="C:cytoplasm"/>
    <property type="evidence" value="ECO:0007669"/>
    <property type="project" value="UniProtKB-SubCell"/>
</dbReference>
<dbReference type="GO" id="GO:0005524">
    <property type="term" value="F:ATP binding"/>
    <property type="evidence" value="ECO:0007669"/>
    <property type="project" value="UniProtKB-UniRule"/>
</dbReference>
<dbReference type="GO" id="GO:0008764">
    <property type="term" value="F:UDP-N-acetylmuramoylalanine-D-glutamate ligase activity"/>
    <property type="evidence" value="ECO:0007669"/>
    <property type="project" value="UniProtKB-UniRule"/>
</dbReference>
<dbReference type="GO" id="GO:0051301">
    <property type="term" value="P:cell division"/>
    <property type="evidence" value="ECO:0007669"/>
    <property type="project" value="UniProtKB-KW"/>
</dbReference>
<dbReference type="GO" id="GO:0071555">
    <property type="term" value="P:cell wall organization"/>
    <property type="evidence" value="ECO:0007669"/>
    <property type="project" value="UniProtKB-KW"/>
</dbReference>
<dbReference type="GO" id="GO:0009252">
    <property type="term" value="P:peptidoglycan biosynthetic process"/>
    <property type="evidence" value="ECO:0007669"/>
    <property type="project" value="UniProtKB-UniRule"/>
</dbReference>
<dbReference type="GO" id="GO:0008360">
    <property type="term" value="P:regulation of cell shape"/>
    <property type="evidence" value="ECO:0007669"/>
    <property type="project" value="UniProtKB-KW"/>
</dbReference>
<dbReference type="Gene3D" id="3.90.190.20">
    <property type="entry name" value="Mur ligase, C-terminal domain"/>
    <property type="match status" value="1"/>
</dbReference>
<dbReference type="Gene3D" id="3.40.1190.10">
    <property type="entry name" value="Mur-like, catalytic domain"/>
    <property type="match status" value="1"/>
</dbReference>
<dbReference type="Gene3D" id="3.40.50.720">
    <property type="entry name" value="NAD(P)-binding Rossmann-like Domain"/>
    <property type="match status" value="1"/>
</dbReference>
<dbReference type="HAMAP" id="MF_00639">
    <property type="entry name" value="MurD"/>
    <property type="match status" value="1"/>
</dbReference>
<dbReference type="InterPro" id="IPR036565">
    <property type="entry name" value="Mur-like_cat_sf"/>
</dbReference>
<dbReference type="InterPro" id="IPR004101">
    <property type="entry name" value="Mur_ligase_C"/>
</dbReference>
<dbReference type="InterPro" id="IPR036615">
    <property type="entry name" value="Mur_ligase_C_dom_sf"/>
</dbReference>
<dbReference type="InterPro" id="IPR013221">
    <property type="entry name" value="Mur_ligase_cen"/>
</dbReference>
<dbReference type="InterPro" id="IPR005762">
    <property type="entry name" value="MurD"/>
</dbReference>
<dbReference type="NCBIfam" id="TIGR01087">
    <property type="entry name" value="murD"/>
    <property type="match status" value="1"/>
</dbReference>
<dbReference type="PANTHER" id="PTHR43692">
    <property type="entry name" value="UDP-N-ACETYLMURAMOYLALANINE--D-GLUTAMATE LIGASE"/>
    <property type="match status" value="1"/>
</dbReference>
<dbReference type="PANTHER" id="PTHR43692:SF1">
    <property type="entry name" value="UDP-N-ACETYLMURAMOYLALANINE--D-GLUTAMATE LIGASE"/>
    <property type="match status" value="1"/>
</dbReference>
<dbReference type="Pfam" id="PF02875">
    <property type="entry name" value="Mur_ligase_C"/>
    <property type="match status" value="1"/>
</dbReference>
<dbReference type="Pfam" id="PF08245">
    <property type="entry name" value="Mur_ligase_M"/>
    <property type="match status" value="1"/>
</dbReference>
<dbReference type="SUPFAM" id="SSF51984">
    <property type="entry name" value="MurCD N-terminal domain"/>
    <property type="match status" value="1"/>
</dbReference>
<dbReference type="SUPFAM" id="SSF53623">
    <property type="entry name" value="MurD-like peptide ligases, catalytic domain"/>
    <property type="match status" value="1"/>
</dbReference>
<dbReference type="SUPFAM" id="SSF53244">
    <property type="entry name" value="MurD-like peptide ligases, peptide-binding domain"/>
    <property type="match status" value="1"/>
</dbReference>
<proteinExistence type="inferred from homology"/>
<comment type="function">
    <text evidence="1">Cell wall formation. Catalyzes the addition of glutamate to the nucleotide precursor UDP-N-acetylmuramoyl-L-alanine (UMA).</text>
</comment>
<comment type="catalytic activity">
    <reaction evidence="1">
        <text>UDP-N-acetyl-alpha-D-muramoyl-L-alanine + D-glutamate + ATP = UDP-N-acetyl-alpha-D-muramoyl-L-alanyl-D-glutamate + ADP + phosphate + H(+)</text>
        <dbReference type="Rhea" id="RHEA:16429"/>
        <dbReference type="ChEBI" id="CHEBI:15378"/>
        <dbReference type="ChEBI" id="CHEBI:29986"/>
        <dbReference type="ChEBI" id="CHEBI:30616"/>
        <dbReference type="ChEBI" id="CHEBI:43474"/>
        <dbReference type="ChEBI" id="CHEBI:83898"/>
        <dbReference type="ChEBI" id="CHEBI:83900"/>
        <dbReference type="ChEBI" id="CHEBI:456216"/>
        <dbReference type="EC" id="6.3.2.9"/>
    </reaction>
</comment>
<comment type="pathway">
    <text evidence="1">Cell wall biogenesis; peptidoglycan biosynthesis.</text>
</comment>
<comment type="subcellular location">
    <subcellularLocation>
        <location evidence="1">Cytoplasm</location>
    </subcellularLocation>
</comment>
<comment type="similarity">
    <text evidence="1">Belongs to the MurCDEF family.</text>
</comment>
<evidence type="ECO:0000255" key="1">
    <source>
        <dbReference type="HAMAP-Rule" id="MF_00639"/>
    </source>
</evidence>